<protein>
    <recommendedName>
        <fullName>Decorin</fullName>
    </recommendedName>
    <alternativeName>
        <fullName>Bone proteoglycan II</fullName>
    </alternativeName>
    <alternativeName>
        <fullName>Dermatan sulfate proteoglycan-II</fullName>
        <shortName>DSPG</shortName>
    </alternativeName>
    <alternativeName>
        <fullName>PG-S2</fullName>
    </alternativeName>
    <alternativeName>
        <fullName>PG40</fullName>
    </alternativeName>
</protein>
<comment type="function">
    <text evidence="1">May affect the rate of fibrils formation (By similarity). May be implicated in the dilatation of the rat cervix.</text>
</comment>
<comment type="subunit">
    <text evidence="1">Binds to type I and type II collagen, fibronectin and TGF-beta. Forms a ternary complex with MFAP2 and ELN. Interacts with DPT (By similarity).</text>
</comment>
<comment type="subcellular location">
    <subcellularLocation>
        <location>Secreted</location>
        <location>Extracellular space</location>
        <location>Extracellular matrix</location>
    </subcellularLocation>
    <subcellularLocation>
        <location evidence="2">Secreted</location>
    </subcellularLocation>
</comment>
<comment type="developmental stage">
    <text>The amount of DSPG per cervix increases 4-fold during pregnancy, then falls precipitously within 1 day post partum.</text>
</comment>
<comment type="PTM">
    <text evidence="1">The attached glycosaminoglycan chain can be either chondroitin sulfate or dermatan sulfate depending upon the tissue of origin.</text>
</comment>
<comment type="similarity">
    <text evidence="6">Belongs to the small leucine-rich proteoglycan (SLRP) family. SLRP class I subfamily.</text>
</comment>
<organism>
    <name type="scientific">Rattus norvegicus</name>
    <name type="common">Rat</name>
    <dbReference type="NCBI Taxonomy" id="10116"/>
    <lineage>
        <taxon>Eukaryota</taxon>
        <taxon>Metazoa</taxon>
        <taxon>Chordata</taxon>
        <taxon>Craniata</taxon>
        <taxon>Vertebrata</taxon>
        <taxon>Euteleostomi</taxon>
        <taxon>Mammalia</taxon>
        <taxon>Eutheria</taxon>
        <taxon>Euarchontoglires</taxon>
        <taxon>Glires</taxon>
        <taxon>Rodentia</taxon>
        <taxon>Myomorpha</taxon>
        <taxon>Muroidea</taxon>
        <taxon>Muridae</taxon>
        <taxon>Murinae</taxon>
        <taxon>Rattus</taxon>
    </lineage>
</organism>
<reference key="1">
    <citation type="journal article" date="1992" name="Biochim. Biophys. Acta">
        <title>cDNA sequence for rat dermatan sulfate proteoglycan-II (decorin).</title>
        <authorList>
            <person name="Abramson S.R."/>
            <person name="Woessner J.F."/>
        </authorList>
    </citation>
    <scope>NUCLEOTIDE SEQUENCE [MRNA]</scope>
    <source>
        <strain>Sprague-Dawley</strain>
        <tissue>Uterus</tissue>
    </source>
</reference>
<reference key="2">
    <citation type="journal article" date="2004" name="Genome Res.">
        <title>The status, quality, and expansion of the NIH full-length cDNA project: the Mammalian Gene Collection (MGC).</title>
        <authorList>
            <consortium name="The MGC Project Team"/>
        </authorList>
    </citation>
    <scope>NUCLEOTIDE SEQUENCE [LARGE SCALE MRNA]</scope>
    <source>
        <tissue>Heart</tissue>
    </source>
</reference>
<reference key="3">
    <citation type="journal article" date="1992" name="Eur. J. Cell Biol.">
        <title>Molecular characterization of vascular smooth muscle decorin: deduced core protein structure and regulation of gene expression.</title>
        <authorList>
            <person name="Asundi V.K."/>
            <person name="Dreher K.L."/>
        </authorList>
    </citation>
    <scope>NUCLEOTIDE SEQUENCE [MRNA] OF 11-354</scope>
</reference>
<reference key="4">
    <citation type="journal article" date="1989" name="Biochem. J.">
        <title>Purification and characterization of a small dermatan sulphate proteoglycan implicated in the dilatation of the rat uterine cervix.</title>
        <authorList>
            <person name="Kokenyesi R."/>
            <person name="Woessner J.F."/>
        </authorList>
    </citation>
    <scope>PROTEIN SEQUENCE OF 31-48 AND 171-191</scope>
    <scope>GLYCOSYLATION AT SER-34</scope>
    <source>
        <strain>Sprague-Dawley</strain>
        <tissue>Uterus</tissue>
    </source>
</reference>
<reference key="5">
    <citation type="journal article" date="2015" name="J. Proteome Res.">
        <title>Peptidomics for studying limited proteolysis.</title>
        <authorList>
            <person name="Tsuchiya T."/>
            <person name="Osaki T."/>
            <person name="Minamino N."/>
            <person name="Sasaki K."/>
        </authorList>
    </citation>
    <scope>CLEAVAGE OF SIGNAL PEPTIDE AFTER ALA-16</scope>
    <scope>CLEAVAGE OF PROPEPTIDE AFTER GLU-30</scope>
    <scope>IDENTIFICATION BY MASS SPECTROMETRY</scope>
</reference>
<accession>Q01129</accession>
<feature type="signal peptide" evidence="4">
    <location>
        <begin position="1"/>
        <end position="16"/>
    </location>
</feature>
<feature type="propeptide" id="PRO_0000032719" evidence="4 5">
    <location>
        <begin position="17"/>
        <end position="30"/>
    </location>
</feature>
<feature type="chain" id="PRO_0000032720" description="Decorin">
    <location>
        <begin position="31"/>
        <end position="354"/>
    </location>
</feature>
<feature type="repeat" description="LRR 1">
    <location>
        <begin position="68"/>
        <end position="88"/>
    </location>
</feature>
<feature type="repeat" description="LRR 2">
    <location>
        <begin position="89"/>
        <end position="112"/>
    </location>
</feature>
<feature type="repeat" description="LRR 3">
    <location>
        <begin position="113"/>
        <end position="136"/>
    </location>
</feature>
<feature type="repeat" description="LRR 4">
    <location>
        <begin position="137"/>
        <end position="157"/>
    </location>
</feature>
<feature type="repeat" description="LRR 5">
    <location>
        <begin position="158"/>
        <end position="181"/>
    </location>
</feature>
<feature type="repeat" description="LRR 6">
    <location>
        <begin position="182"/>
        <end position="207"/>
    </location>
</feature>
<feature type="repeat" description="LRR 7">
    <location>
        <begin position="208"/>
        <end position="228"/>
    </location>
</feature>
<feature type="repeat" description="LRR 8">
    <location>
        <begin position="229"/>
        <end position="252"/>
    </location>
</feature>
<feature type="repeat" description="LRR 9">
    <location>
        <begin position="253"/>
        <end position="276"/>
    </location>
</feature>
<feature type="repeat" description="LRR 10">
    <location>
        <begin position="277"/>
        <end position="299"/>
    </location>
</feature>
<feature type="repeat" description="LRR 11">
    <location>
        <begin position="300"/>
        <end position="329"/>
    </location>
</feature>
<feature type="repeat" description="LRR 12">
    <location>
        <begin position="330"/>
        <end position="354"/>
    </location>
</feature>
<feature type="glycosylation site" description="O-linked (Xyl...) (glycosaminoglycan) serine" evidence="5">
    <location>
        <position position="34"/>
    </location>
</feature>
<feature type="glycosylation site" description="N-linked (GlcNAc...) asparagine" evidence="3">
    <location>
        <position position="206"/>
    </location>
</feature>
<feature type="glycosylation site" description="N-linked (GlcNAc...) asparagine" evidence="3">
    <location>
        <position position="241"/>
    </location>
</feature>
<feature type="glycosylation site" description="N-linked (GlcNAc...) asparagine" evidence="3">
    <location>
        <position position="257"/>
    </location>
</feature>
<feature type="glycosylation site" description="N-linked (GlcNAc...) asparagine" evidence="3">
    <location>
        <position position="298"/>
    </location>
</feature>
<feature type="disulfide bond" evidence="1">
    <location>
        <begin position="49"/>
        <end position="55"/>
    </location>
</feature>
<feature type="disulfide bond" evidence="1">
    <location>
        <begin position="53"/>
        <end position="62"/>
    </location>
</feature>
<feature type="disulfide bond" evidence="1">
    <location>
        <begin position="308"/>
        <end position="341"/>
    </location>
</feature>
<gene>
    <name type="primary">Dcn</name>
</gene>
<name>PGS2_RAT</name>
<sequence length="354" mass="39805">MKATLVLFLLAQVSWAGPFEQRGLFDFMLEDEASGIIPYDPDNPLISMCPYRCQCHLRVVQCSDLGLDKVPWEFPPDTTLLDLQNNKITEIKEGAFKNLKDLHTLILVNNKISKISPEAFKPLVKLERLYLSKNHLKELPEKLPKTLQELRLHDNEITKLKKSVFNGLNRMIVIELGGNPLKNSGIENGALQGMKGLGYIRISDTNITAIPQGLPTSISELHLDGNKIAKVDAASLKGMSNLSKLGLSFNSITVVENGSLANVPHLRELHLDNNKLLRVPAGLAQHKYVQVVYLHNNNISEVGQHDFCLPSYQTRKTSYTAVSLYSNPVRYWQIHPHTFRCVFGRSTIQLGNYK</sequence>
<dbReference type="EMBL" id="Z12298">
    <property type="protein sequence ID" value="CAA78170.1"/>
    <property type="molecule type" value="mRNA"/>
</dbReference>
<dbReference type="EMBL" id="BC083750">
    <property type="protein sequence ID" value="AAH83750.1"/>
    <property type="molecule type" value="mRNA"/>
</dbReference>
<dbReference type="EMBL" id="X59859">
    <property type="protein sequence ID" value="CAA42519.1"/>
    <property type="molecule type" value="mRNA"/>
</dbReference>
<dbReference type="PIR" id="S29145">
    <property type="entry name" value="S29145"/>
</dbReference>
<dbReference type="RefSeq" id="NP_077043.1">
    <property type="nucleotide sequence ID" value="NM_024129.1"/>
</dbReference>
<dbReference type="RefSeq" id="XP_006241347.1">
    <property type="nucleotide sequence ID" value="XM_006241285.2"/>
</dbReference>
<dbReference type="SMR" id="Q01129"/>
<dbReference type="BioGRID" id="247822">
    <property type="interactions" value="4"/>
</dbReference>
<dbReference type="FunCoup" id="Q01129">
    <property type="interactions" value="223"/>
</dbReference>
<dbReference type="IntAct" id="Q01129">
    <property type="interactions" value="1"/>
</dbReference>
<dbReference type="STRING" id="10116.ENSRNOP00000006070"/>
<dbReference type="GlyCosmos" id="Q01129">
    <property type="glycosylation" value="5 sites, No reported glycans"/>
</dbReference>
<dbReference type="GlyGen" id="Q01129">
    <property type="glycosylation" value="5 sites"/>
</dbReference>
<dbReference type="iPTMnet" id="Q01129"/>
<dbReference type="PhosphoSitePlus" id="Q01129"/>
<dbReference type="SwissPalm" id="Q01129"/>
<dbReference type="PaxDb" id="10116-ENSRNOP00000006070"/>
<dbReference type="Ensembl" id="ENSRNOT00000006070.7">
    <property type="protein sequence ID" value="ENSRNOP00000006070.4"/>
    <property type="gene ID" value="ENSRNOG00000004554.7"/>
</dbReference>
<dbReference type="GeneID" id="29139"/>
<dbReference type="KEGG" id="rno:29139"/>
<dbReference type="UCSC" id="RGD:61895">
    <property type="organism name" value="rat"/>
</dbReference>
<dbReference type="AGR" id="RGD:61895"/>
<dbReference type="CTD" id="1634"/>
<dbReference type="RGD" id="61895">
    <property type="gene designation" value="Dcn"/>
</dbReference>
<dbReference type="eggNOG" id="KOG0619">
    <property type="taxonomic scope" value="Eukaryota"/>
</dbReference>
<dbReference type="GeneTree" id="ENSGT00940000158382"/>
<dbReference type="HOGENOM" id="CLU_000288_186_0_1"/>
<dbReference type="InParanoid" id="Q01129"/>
<dbReference type="OrthoDB" id="24178at9989"/>
<dbReference type="PhylomeDB" id="Q01129"/>
<dbReference type="TreeFam" id="TF334562"/>
<dbReference type="Reactome" id="R-RNO-1474228">
    <property type="pathway name" value="Degradation of the extracellular matrix"/>
</dbReference>
<dbReference type="Reactome" id="R-RNO-1971475">
    <property type="pathway name" value="A tetrasaccharide linker sequence is required for GAG synthesis"/>
</dbReference>
<dbReference type="Reactome" id="R-RNO-2022870">
    <property type="pathway name" value="Chondroitin sulfate biosynthesis"/>
</dbReference>
<dbReference type="Reactome" id="R-RNO-2022923">
    <property type="pathway name" value="Dermatan sulfate biosynthesis"/>
</dbReference>
<dbReference type="Reactome" id="R-RNO-2024101">
    <property type="pathway name" value="CS/DS degradation"/>
</dbReference>
<dbReference type="Reactome" id="R-RNO-3000178">
    <property type="pathway name" value="ECM proteoglycans"/>
</dbReference>
<dbReference type="PRO" id="PR:Q01129"/>
<dbReference type="Proteomes" id="UP000002494">
    <property type="component" value="Chromosome 7"/>
</dbReference>
<dbReference type="Bgee" id="ENSRNOG00000004554">
    <property type="expression patterns" value="Expressed in stomach and 20 other cell types or tissues"/>
</dbReference>
<dbReference type="GO" id="GO:0005589">
    <property type="term" value="C:collagen type VI trimer"/>
    <property type="evidence" value="ECO:0000314"/>
    <property type="project" value="RGD"/>
</dbReference>
<dbReference type="GO" id="GO:0005615">
    <property type="term" value="C:extracellular space"/>
    <property type="evidence" value="ECO:0000318"/>
    <property type="project" value="GO_Central"/>
</dbReference>
<dbReference type="GO" id="GO:0005518">
    <property type="term" value="F:collagen binding"/>
    <property type="evidence" value="ECO:0000314"/>
    <property type="project" value="RGD"/>
</dbReference>
<dbReference type="GO" id="GO:0050840">
    <property type="term" value="F:extracellular matrix binding"/>
    <property type="evidence" value="ECO:0000266"/>
    <property type="project" value="RGD"/>
</dbReference>
<dbReference type="GO" id="GO:0005539">
    <property type="term" value="F:glycosaminoglycan binding"/>
    <property type="evidence" value="ECO:0000266"/>
    <property type="project" value="RGD"/>
</dbReference>
<dbReference type="GO" id="GO:0001822">
    <property type="term" value="P:kidney development"/>
    <property type="evidence" value="ECO:0000270"/>
    <property type="project" value="RGD"/>
</dbReference>
<dbReference type="GO" id="GO:0016525">
    <property type="term" value="P:negative regulation of angiogenesis"/>
    <property type="evidence" value="ECO:0000266"/>
    <property type="project" value="RGD"/>
</dbReference>
<dbReference type="GO" id="GO:0010596">
    <property type="term" value="P:negative regulation of endothelial cell migration"/>
    <property type="evidence" value="ECO:0000266"/>
    <property type="project" value="RGD"/>
</dbReference>
<dbReference type="GO" id="GO:1900747">
    <property type="term" value="P:negative regulation of vascular endothelial growth factor signaling pathway"/>
    <property type="evidence" value="ECO:0000266"/>
    <property type="project" value="RGD"/>
</dbReference>
<dbReference type="GO" id="GO:0001890">
    <property type="term" value="P:placenta development"/>
    <property type="evidence" value="ECO:0000270"/>
    <property type="project" value="RGD"/>
</dbReference>
<dbReference type="GO" id="GO:0010508">
    <property type="term" value="P:positive regulation of autophagy"/>
    <property type="evidence" value="ECO:0000266"/>
    <property type="project" value="RGD"/>
</dbReference>
<dbReference type="GO" id="GO:0016239">
    <property type="term" value="P:positive regulation of macroautophagy"/>
    <property type="evidence" value="ECO:0000266"/>
    <property type="project" value="RGD"/>
</dbReference>
<dbReference type="GO" id="GO:0051901">
    <property type="term" value="P:positive regulation of mitochondrial depolarization"/>
    <property type="evidence" value="ECO:0000266"/>
    <property type="project" value="RGD"/>
</dbReference>
<dbReference type="GO" id="GO:0090141">
    <property type="term" value="P:positive regulation of mitochondrial fission"/>
    <property type="evidence" value="ECO:0000266"/>
    <property type="project" value="RGD"/>
</dbReference>
<dbReference type="GO" id="GO:0051897">
    <property type="term" value="P:positive regulation of phosphatidylinositol 3-kinase/protein kinase B signal transduction"/>
    <property type="evidence" value="ECO:0000266"/>
    <property type="project" value="RGD"/>
</dbReference>
<dbReference type="GO" id="GO:0045944">
    <property type="term" value="P:positive regulation of transcription by RNA polymerase II"/>
    <property type="evidence" value="ECO:0000266"/>
    <property type="project" value="RGD"/>
</dbReference>
<dbReference type="GO" id="GO:0032496">
    <property type="term" value="P:response to lipopolysaccharide"/>
    <property type="evidence" value="ECO:0000270"/>
    <property type="project" value="RGD"/>
</dbReference>
<dbReference type="GO" id="GO:0009612">
    <property type="term" value="P:response to mechanical stimulus"/>
    <property type="evidence" value="ECO:0000270"/>
    <property type="project" value="RGD"/>
</dbReference>
<dbReference type="GO" id="GO:0007519">
    <property type="term" value="P:skeletal muscle tissue development"/>
    <property type="evidence" value="ECO:0000270"/>
    <property type="project" value="RGD"/>
</dbReference>
<dbReference type="FunFam" id="3.80.10.10:FF:000038">
    <property type="entry name" value="Biglycan"/>
    <property type="match status" value="1"/>
</dbReference>
<dbReference type="Gene3D" id="3.80.10.10">
    <property type="entry name" value="Ribonuclease Inhibitor"/>
    <property type="match status" value="1"/>
</dbReference>
<dbReference type="InterPro" id="IPR001611">
    <property type="entry name" value="Leu-rich_rpt"/>
</dbReference>
<dbReference type="InterPro" id="IPR003591">
    <property type="entry name" value="Leu-rich_rpt_typical-subtyp"/>
</dbReference>
<dbReference type="InterPro" id="IPR032675">
    <property type="entry name" value="LRR_dom_sf"/>
</dbReference>
<dbReference type="InterPro" id="IPR000372">
    <property type="entry name" value="LRRNT"/>
</dbReference>
<dbReference type="InterPro" id="IPR050333">
    <property type="entry name" value="SLRP"/>
</dbReference>
<dbReference type="InterPro" id="IPR016352">
    <property type="entry name" value="SLRP_I_decor/aspor/byglycan"/>
</dbReference>
<dbReference type="PANTHER" id="PTHR45712">
    <property type="entry name" value="AGAP008170-PA"/>
    <property type="match status" value="1"/>
</dbReference>
<dbReference type="PANTHER" id="PTHR45712:SF14">
    <property type="entry name" value="DECORIN"/>
    <property type="match status" value="1"/>
</dbReference>
<dbReference type="Pfam" id="PF13855">
    <property type="entry name" value="LRR_8"/>
    <property type="match status" value="3"/>
</dbReference>
<dbReference type="Pfam" id="PF01462">
    <property type="entry name" value="LRRNT"/>
    <property type="match status" value="1"/>
</dbReference>
<dbReference type="PIRSF" id="PIRSF002490">
    <property type="entry name" value="SLRP_I"/>
    <property type="match status" value="1"/>
</dbReference>
<dbReference type="SMART" id="SM00364">
    <property type="entry name" value="LRR_BAC"/>
    <property type="match status" value="3"/>
</dbReference>
<dbReference type="SMART" id="SM00369">
    <property type="entry name" value="LRR_TYP"/>
    <property type="match status" value="7"/>
</dbReference>
<dbReference type="SMART" id="SM00013">
    <property type="entry name" value="LRRNT"/>
    <property type="match status" value="1"/>
</dbReference>
<dbReference type="SUPFAM" id="SSF52058">
    <property type="entry name" value="L domain-like"/>
    <property type="match status" value="1"/>
</dbReference>
<dbReference type="PROSITE" id="PS51450">
    <property type="entry name" value="LRR"/>
    <property type="match status" value="8"/>
</dbReference>
<keyword id="KW-0903">Direct protein sequencing</keyword>
<keyword id="KW-1015">Disulfide bond</keyword>
<keyword id="KW-0272">Extracellular matrix</keyword>
<keyword id="KW-0325">Glycoprotein</keyword>
<keyword id="KW-0433">Leucine-rich repeat</keyword>
<keyword id="KW-0654">Proteoglycan</keyword>
<keyword id="KW-1185">Reference proteome</keyword>
<keyword id="KW-0677">Repeat</keyword>
<keyword id="KW-0964">Secreted</keyword>
<keyword id="KW-0732">Signal</keyword>
<proteinExistence type="evidence at protein level"/>
<evidence type="ECO:0000250" key="1"/>
<evidence type="ECO:0000250" key="2">
    <source>
        <dbReference type="UniProtKB" id="P07585"/>
    </source>
</evidence>
<evidence type="ECO:0000255" key="3"/>
<evidence type="ECO:0000269" key="4">
    <source>
    </source>
</evidence>
<evidence type="ECO:0000269" key="5">
    <source>
    </source>
</evidence>
<evidence type="ECO:0000305" key="6"/>